<accession>Q9PKL0</accession>
<gene>
    <name evidence="1" type="primary">pyrG</name>
    <name type="ordered locus">TC_0455</name>
</gene>
<proteinExistence type="inferred from homology"/>
<organism>
    <name type="scientific">Chlamydia muridarum (strain MoPn / Nigg)</name>
    <dbReference type="NCBI Taxonomy" id="243161"/>
    <lineage>
        <taxon>Bacteria</taxon>
        <taxon>Pseudomonadati</taxon>
        <taxon>Chlamydiota</taxon>
        <taxon>Chlamydiia</taxon>
        <taxon>Chlamydiales</taxon>
        <taxon>Chlamydiaceae</taxon>
        <taxon>Chlamydia/Chlamydophila group</taxon>
        <taxon>Chlamydia</taxon>
    </lineage>
</organism>
<feature type="chain" id="PRO_0000138175" description="CTP synthase">
    <location>
        <begin position="1"/>
        <end position="536"/>
    </location>
</feature>
<feature type="domain" description="Glutamine amidotransferase type-1" evidence="1">
    <location>
        <begin position="294"/>
        <end position="532"/>
    </location>
</feature>
<feature type="region of interest" description="Amidoligase domain" evidence="1">
    <location>
        <begin position="1"/>
        <end position="268"/>
    </location>
</feature>
<feature type="active site" description="Nucleophile; for glutamine hydrolysis" evidence="1">
    <location>
        <position position="380"/>
    </location>
</feature>
<feature type="active site" evidence="1">
    <location>
        <position position="505"/>
    </location>
</feature>
<feature type="active site" evidence="1">
    <location>
        <position position="507"/>
    </location>
</feature>
<feature type="binding site" evidence="1">
    <location>
        <position position="14"/>
    </location>
    <ligand>
        <name>CTP</name>
        <dbReference type="ChEBI" id="CHEBI:37563"/>
        <note>allosteric inhibitor</note>
    </ligand>
</feature>
<feature type="binding site" evidence="1">
    <location>
        <position position="14"/>
    </location>
    <ligand>
        <name>UTP</name>
        <dbReference type="ChEBI" id="CHEBI:46398"/>
    </ligand>
</feature>
<feature type="binding site" evidence="1">
    <location>
        <begin position="15"/>
        <end position="20"/>
    </location>
    <ligand>
        <name>ATP</name>
        <dbReference type="ChEBI" id="CHEBI:30616"/>
    </ligand>
</feature>
<feature type="binding site" evidence="1">
    <location>
        <position position="55"/>
    </location>
    <ligand>
        <name>L-glutamine</name>
        <dbReference type="ChEBI" id="CHEBI:58359"/>
    </ligand>
</feature>
<feature type="binding site" evidence="1">
    <location>
        <position position="72"/>
    </location>
    <ligand>
        <name>ATP</name>
        <dbReference type="ChEBI" id="CHEBI:30616"/>
    </ligand>
</feature>
<feature type="binding site" evidence="1">
    <location>
        <position position="72"/>
    </location>
    <ligand>
        <name>Mg(2+)</name>
        <dbReference type="ChEBI" id="CHEBI:18420"/>
    </ligand>
</feature>
<feature type="binding site" evidence="1">
    <location>
        <position position="142"/>
    </location>
    <ligand>
        <name>Mg(2+)</name>
        <dbReference type="ChEBI" id="CHEBI:18420"/>
    </ligand>
</feature>
<feature type="binding site" evidence="1">
    <location>
        <begin position="149"/>
        <end position="151"/>
    </location>
    <ligand>
        <name>CTP</name>
        <dbReference type="ChEBI" id="CHEBI:37563"/>
        <note>allosteric inhibitor</note>
    </ligand>
</feature>
<feature type="binding site" evidence="1">
    <location>
        <begin position="188"/>
        <end position="193"/>
    </location>
    <ligand>
        <name>CTP</name>
        <dbReference type="ChEBI" id="CHEBI:37563"/>
        <note>allosteric inhibitor</note>
    </ligand>
</feature>
<feature type="binding site" evidence="1">
    <location>
        <begin position="188"/>
        <end position="193"/>
    </location>
    <ligand>
        <name>UTP</name>
        <dbReference type="ChEBI" id="CHEBI:46398"/>
    </ligand>
</feature>
<feature type="binding site" evidence="1">
    <location>
        <position position="224"/>
    </location>
    <ligand>
        <name>CTP</name>
        <dbReference type="ChEBI" id="CHEBI:37563"/>
        <note>allosteric inhibitor</note>
    </ligand>
</feature>
<feature type="binding site" evidence="1">
    <location>
        <position position="224"/>
    </location>
    <ligand>
        <name>UTP</name>
        <dbReference type="ChEBI" id="CHEBI:46398"/>
    </ligand>
</feature>
<feature type="binding site" evidence="1">
    <location>
        <position position="353"/>
    </location>
    <ligand>
        <name>L-glutamine</name>
        <dbReference type="ChEBI" id="CHEBI:58359"/>
    </ligand>
</feature>
<feature type="binding site" evidence="1">
    <location>
        <begin position="381"/>
        <end position="384"/>
    </location>
    <ligand>
        <name>L-glutamine</name>
        <dbReference type="ChEBI" id="CHEBI:58359"/>
    </ligand>
</feature>
<feature type="binding site" evidence="1">
    <location>
        <position position="404"/>
    </location>
    <ligand>
        <name>L-glutamine</name>
        <dbReference type="ChEBI" id="CHEBI:58359"/>
    </ligand>
</feature>
<feature type="binding site" evidence="1">
    <location>
        <position position="460"/>
    </location>
    <ligand>
        <name>L-glutamine</name>
        <dbReference type="ChEBI" id="CHEBI:58359"/>
    </ligand>
</feature>
<comment type="function">
    <text evidence="1">Catalyzes the ATP-dependent amination of UTP to CTP with either L-glutamine or ammonia as the source of nitrogen. Regulates intracellular CTP levels through interactions with the four ribonucleotide triphosphates.</text>
</comment>
<comment type="catalytic activity">
    <reaction evidence="1">
        <text>UTP + L-glutamine + ATP + H2O = CTP + L-glutamate + ADP + phosphate + 2 H(+)</text>
        <dbReference type="Rhea" id="RHEA:26426"/>
        <dbReference type="ChEBI" id="CHEBI:15377"/>
        <dbReference type="ChEBI" id="CHEBI:15378"/>
        <dbReference type="ChEBI" id="CHEBI:29985"/>
        <dbReference type="ChEBI" id="CHEBI:30616"/>
        <dbReference type="ChEBI" id="CHEBI:37563"/>
        <dbReference type="ChEBI" id="CHEBI:43474"/>
        <dbReference type="ChEBI" id="CHEBI:46398"/>
        <dbReference type="ChEBI" id="CHEBI:58359"/>
        <dbReference type="ChEBI" id="CHEBI:456216"/>
        <dbReference type="EC" id="6.3.4.2"/>
    </reaction>
</comment>
<comment type="catalytic activity">
    <reaction evidence="1">
        <text>L-glutamine + H2O = L-glutamate + NH4(+)</text>
        <dbReference type="Rhea" id="RHEA:15889"/>
        <dbReference type="ChEBI" id="CHEBI:15377"/>
        <dbReference type="ChEBI" id="CHEBI:28938"/>
        <dbReference type="ChEBI" id="CHEBI:29985"/>
        <dbReference type="ChEBI" id="CHEBI:58359"/>
    </reaction>
</comment>
<comment type="catalytic activity">
    <reaction evidence="1">
        <text>UTP + NH4(+) + ATP = CTP + ADP + phosphate + 2 H(+)</text>
        <dbReference type="Rhea" id="RHEA:16597"/>
        <dbReference type="ChEBI" id="CHEBI:15378"/>
        <dbReference type="ChEBI" id="CHEBI:28938"/>
        <dbReference type="ChEBI" id="CHEBI:30616"/>
        <dbReference type="ChEBI" id="CHEBI:37563"/>
        <dbReference type="ChEBI" id="CHEBI:43474"/>
        <dbReference type="ChEBI" id="CHEBI:46398"/>
        <dbReference type="ChEBI" id="CHEBI:456216"/>
    </reaction>
</comment>
<comment type="activity regulation">
    <text evidence="1">Allosterically activated by GTP, when glutamine is the substrate; GTP has no effect on the reaction when ammonia is the substrate. The allosteric effector GTP functions by stabilizing the protein conformation that binds the tetrahedral intermediate(s) formed during glutamine hydrolysis. Inhibited by the product CTP, via allosteric rather than competitive inhibition.</text>
</comment>
<comment type="pathway">
    <text evidence="1">Pyrimidine metabolism; CTP biosynthesis via de novo pathway; CTP from UDP: step 2/2.</text>
</comment>
<comment type="subunit">
    <text evidence="1">Homotetramer.</text>
</comment>
<comment type="miscellaneous">
    <text evidence="1">CTPSs have evolved a hybrid strategy for distinguishing between UTP and CTP. The overlapping regions of the product feedback inhibitory and substrate sites recognize a common feature in both compounds, the triphosphate moiety. To differentiate isosteric substrate and product pyrimidine rings, an additional pocket far from the expected kinase/ligase catalytic site, specifically recognizes the cytosine and ribose portions of the product inhibitor.</text>
</comment>
<comment type="similarity">
    <text evidence="1">Belongs to the CTP synthase family.</text>
</comment>
<evidence type="ECO:0000255" key="1">
    <source>
        <dbReference type="HAMAP-Rule" id="MF_01227"/>
    </source>
</evidence>
<name>PYRG_CHLMU</name>
<protein>
    <recommendedName>
        <fullName evidence="1">CTP synthase</fullName>
        <ecNumber evidence="1">6.3.4.2</ecNumber>
    </recommendedName>
    <alternativeName>
        <fullName evidence="1">Cytidine 5'-triphosphate synthase</fullName>
    </alternativeName>
    <alternativeName>
        <fullName evidence="1">Cytidine triphosphate synthetase</fullName>
        <shortName evidence="1">CTP synthetase</shortName>
        <shortName evidence="1">CTPS</shortName>
    </alternativeName>
    <alternativeName>
        <fullName evidence="1">UTP--ammonia ligase</fullName>
    </alternativeName>
</protein>
<dbReference type="EC" id="6.3.4.2" evidence="1"/>
<dbReference type="EMBL" id="AE002160">
    <property type="protein sequence ID" value="AAF39308.1"/>
    <property type="molecule type" value="Genomic_DNA"/>
</dbReference>
<dbReference type="PIR" id="D81700">
    <property type="entry name" value="D81700"/>
</dbReference>
<dbReference type="RefSeq" id="WP_010230497.1">
    <property type="nucleotide sequence ID" value="NZ_CP063055.1"/>
</dbReference>
<dbReference type="SMR" id="Q9PKL0"/>
<dbReference type="MEROPS" id="C26.964"/>
<dbReference type="GeneID" id="1245810"/>
<dbReference type="KEGG" id="cmu:TC_0455"/>
<dbReference type="eggNOG" id="COG0504">
    <property type="taxonomic scope" value="Bacteria"/>
</dbReference>
<dbReference type="HOGENOM" id="CLU_011675_5_0_0"/>
<dbReference type="OrthoDB" id="9801107at2"/>
<dbReference type="UniPathway" id="UPA00159">
    <property type="reaction ID" value="UER00277"/>
</dbReference>
<dbReference type="Proteomes" id="UP000000800">
    <property type="component" value="Chromosome"/>
</dbReference>
<dbReference type="GO" id="GO:0005829">
    <property type="term" value="C:cytosol"/>
    <property type="evidence" value="ECO:0007669"/>
    <property type="project" value="TreeGrafter"/>
</dbReference>
<dbReference type="GO" id="GO:0005524">
    <property type="term" value="F:ATP binding"/>
    <property type="evidence" value="ECO:0007669"/>
    <property type="project" value="UniProtKB-KW"/>
</dbReference>
<dbReference type="GO" id="GO:0003883">
    <property type="term" value="F:CTP synthase activity"/>
    <property type="evidence" value="ECO:0007669"/>
    <property type="project" value="UniProtKB-UniRule"/>
</dbReference>
<dbReference type="GO" id="GO:0004359">
    <property type="term" value="F:glutaminase activity"/>
    <property type="evidence" value="ECO:0007669"/>
    <property type="project" value="RHEA"/>
</dbReference>
<dbReference type="GO" id="GO:0042802">
    <property type="term" value="F:identical protein binding"/>
    <property type="evidence" value="ECO:0007669"/>
    <property type="project" value="TreeGrafter"/>
</dbReference>
<dbReference type="GO" id="GO:0046872">
    <property type="term" value="F:metal ion binding"/>
    <property type="evidence" value="ECO:0007669"/>
    <property type="project" value="UniProtKB-KW"/>
</dbReference>
<dbReference type="GO" id="GO:0044210">
    <property type="term" value="P:'de novo' CTP biosynthetic process"/>
    <property type="evidence" value="ECO:0007669"/>
    <property type="project" value="UniProtKB-UniRule"/>
</dbReference>
<dbReference type="GO" id="GO:0019856">
    <property type="term" value="P:pyrimidine nucleobase biosynthetic process"/>
    <property type="evidence" value="ECO:0007669"/>
    <property type="project" value="TreeGrafter"/>
</dbReference>
<dbReference type="CDD" id="cd03113">
    <property type="entry name" value="CTPS_N"/>
    <property type="match status" value="1"/>
</dbReference>
<dbReference type="CDD" id="cd01746">
    <property type="entry name" value="GATase1_CTP_Synthase"/>
    <property type="match status" value="1"/>
</dbReference>
<dbReference type="FunFam" id="3.40.50.300:FF:000009">
    <property type="entry name" value="CTP synthase"/>
    <property type="match status" value="1"/>
</dbReference>
<dbReference type="FunFam" id="3.40.50.880:FF:000002">
    <property type="entry name" value="CTP synthase"/>
    <property type="match status" value="1"/>
</dbReference>
<dbReference type="Gene3D" id="3.40.50.880">
    <property type="match status" value="1"/>
</dbReference>
<dbReference type="Gene3D" id="3.40.50.300">
    <property type="entry name" value="P-loop containing nucleotide triphosphate hydrolases"/>
    <property type="match status" value="1"/>
</dbReference>
<dbReference type="HAMAP" id="MF_01227">
    <property type="entry name" value="PyrG"/>
    <property type="match status" value="1"/>
</dbReference>
<dbReference type="InterPro" id="IPR029062">
    <property type="entry name" value="Class_I_gatase-like"/>
</dbReference>
<dbReference type="InterPro" id="IPR004468">
    <property type="entry name" value="CTP_synthase"/>
</dbReference>
<dbReference type="InterPro" id="IPR017456">
    <property type="entry name" value="CTP_synthase_N"/>
</dbReference>
<dbReference type="InterPro" id="IPR017926">
    <property type="entry name" value="GATASE"/>
</dbReference>
<dbReference type="InterPro" id="IPR033828">
    <property type="entry name" value="GATase1_CTP_Synthase"/>
</dbReference>
<dbReference type="InterPro" id="IPR027417">
    <property type="entry name" value="P-loop_NTPase"/>
</dbReference>
<dbReference type="NCBIfam" id="NF003792">
    <property type="entry name" value="PRK05380.1"/>
    <property type="match status" value="1"/>
</dbReference>
<dbReference type="NCBIfam" id="TIGR00337">
    <property type="entry name" value="PyrG"/>
    <property type="match status" value="1"/>
</dbReference>
<dbReference type="PANTHER" id="PTHR11550">
    <property type="entry name" value="CTP SYNTHASE"/>
    <property type="match status" value="1"/>
</dbReference>
<dbReference type="PANTHER" id="PTHR11550:SF0">
    <property type="entry name" value="CTP SYNTHASE-RELATED"/>
    <property type="match status" value="1"/>
</dbReference>
<dbReference type="Pfam" id="PF06418">
    <property type="entry name" value="CTP_synth_N"/>
    <property type="match status" value="1"/>
</dbReference>
<dbReference type="Pfam" id="PF00117">
    <property type="entry name" value="GATase"/>
    <property type="match status" value="1"/>
</dbReference>
<dbReference type="SUPFAM" id="SSF52317">
    <property type="entry name" value="Class I glutamine amidotransferase-like"/>
    <property type="match status" value="1"/>
</dbReference>
<dbReference type="SUPFAM" id="SSF52540">
    <property type="entry name" value="P-loop containing nucleoside triphosphate hydrolases"/>
    <property type="match status" value="1"/>
</dbReference>
<dbReference type="PROSITE" id="PS51273">
    <property type="entry name" value="GATASE_TYPE_1"/>
    <property type="match status" value="1"/>
</dbReference>
<reference key="1">
    <citation type="journal article" date="2000" name="Nucleic Acids Res.">
        <title>Genome sequences of Chlamydia trachomatis MoPn and Chlamydia pneumoniae AR39.</title>
        <authorList>
            <person name="Read T.D."/>
            <person name="Brunham R.C."/>
            <person name="Shen C."/>
            <person name="Gill S.R."/>
            <person name="Heidelberg J.F."/>
            <person name="White O."/>
            <person name="Hickey E.K."/>
            <person name="Peterson J.D."/>
            <person name="Utterback T.R."/>
            <person name="Berry K.J."/>
            <person name="Bass S."/>
            <person name="Linher K.D."/>
            <person name="Weidman J.F."/>
            <person name="Khouri H.M."/>
            <person name="Craven B."/>
            <person name="Bowman C."/>
            <person name="Dodson R.J."/>
            <person name="Gwinn M.L."/>
            <person name="Nelson W.C."/>
            <person name="DeBoy R.T."/>
            <person name="Kolonay J.F."/>
            <person name="McClarty G."/>
            <person name="Salzberg S.L."/>
            <person name="Eisen J.A."/>
            <person name="Fraser C.M."/>
        </authorList>
    </citation>
    <scope>NUCLEOTIDE SEQUENCE [LARGE SCALE GENOMIC DNA]</scope>
    <source>
        <strain>MoPn / Nigg</strain>
    </source>
</reference>
<sequence length="536" mass="59509">MSFKSIFLTGGVVSSLGKGLTAASLALLLERQGLKVAMLKLDPYLNVDPGTMNPYEHGEVYVTDDGVETDLDLGHYHRFSSVQLSKHSTATSGQIYTRVITKERNGEFLGSTVQVIPHVTNEIINVIQACAEHHKPDVLIIEIGGTIGDIESLPFLEAVRQFRCEHPQDCLSIHMTYVPYLKSAKEIKTKPTQHSVQNLRSIGISPDVILCRSEVSLSSEVKRKISLFCNVPENAVFNAIDLENSIYEMPLLLARENIVDFLLSKFGFSPKSLDLTDWQNLVTTLCDGNRHLVRIGLVGKYLEHKDAYKSVFESLSHASIPANCSLEIVPISPESEALTNQLSQCDGCLIPGGFGTRSWEGKIAAARYCRDNNIPCFGICLGMQALVVEYARYALSLPLANSLEMDPNTPDPVVCMMQGQDTMIKGGTMRLGAYPCQITPKSLAFEAYKTDLVQERHRHRYEVNPAYVDLLQKNGLRIVGVCPQGDLCEIIEIPNHRWMLGVQFHPEFLSKLAAPHPLFVKFLSAALDYSLEKGRE</sequence>
<keyword id="KW-0067">ATP-binding</keyword>
<keyword id="KW-0315">Glutamine amidotransferase</keyword>
<keyword id="KW-0436">Ligase</keyword>
<keyword id="KW-0460">Magnesium</keyword>
<keyword id="KW-0479">Metal-binding</keyword>
<keyword id="KW-0547">Nucleotide-binding</keyword>
<keyword id="KW-0665">Pyrimidine biosynthesis</keyword>